<sequence>MNEWTPIAKKYDPLKAGSIDGTDEEPHDRAVLRAMLSRYVPNKGVTGDPHLTLFVSRLSPQTTEEKLKEVFSRYGDIKRIRLVRDFITGFSKGYAFIEYKQENAIMKAHRDANKLVIDQREVFVDFELERNLKGWIPRRFGGGFGGKKESGQLRFGGRDRPFRKPINLPVFPHQFNSESRGEKRHRSRSRDRSHDWRGQRRDYGRDRDRGIRRPEKERPYTKDDKEQNAEHTKRERSREQAKNDKDKEKKDSKRERSRERDYRKHRSDEHNR</sequence>
<dbReference type="EMBL" id="BC123361">
    <property type="protein sequence ID" value="AAI23362.1"/>
    <property type="molecule type" value="mRNA"/>
</dbReference>
<dbReference type="RefSeq" id="NP_001090410.1">
    <property type="nucleotide sequence ID" value="NM_001096941.1"/>
</dbReference>
<dbReference type="SMR" id="Q05AT9"/>
<dbReference type="DNASU" id="779322"/>
<dbReference type="GeneID" id="779322"/>
<dbReference type="KEGG" id="xla:779322"/>
<dbReference type="AGR" id="Xenbase:XB-GENE-940857"/>
<dbReference type="CTD" id="779322"/>
<dbReference type="Xenbase" id="XB-GENE-940857">
    <property type="gene designation" value="snrnp35.L"/>
</dbReference>
<dbReference type="OrthoDB" id="6159137at2759"/>
<dbReference type="Proteomes" id="UP000186698">
    <property type="component" value="Chromosome 1L"/>
</dbReference>
<dbReference type="Bgee" id="779322">
    <property type="expression patterns" value="Expressed in egg cell and 19 other cell types or tissues"/>
</dbReference>
<dbReference type="GO" id="GO:0071011">
    <property type="term" value="C:precatalytic spliceosome"/>
    <property type="evidence" value="ECO:0007669"/>
    <property type="project" value="TreeGrafter"/>
</dbReference>
<dbReference type="GO" id="GO:0005689">
    <property type="term" value="C:U12-type spliceosomal complex"/>
    <property type="evidence" value="ECO:0000318"/>
    <property type="project" value="GO_Central"/>
</dbReference>
<dbReference type="GO" id="GO:0003729">
    <property type="term" value="F:mRNA binding"/>
    <property type="evidence" value="ECO:0000318"/>
    <property type="project" value="GO_Central"/>
</dbReference>
<dbReference type="GO" id="GO:0017069">
    <property type="term" value="F:snRNA binding"/>
    <property type="evidence" value="ECO:0000318"/>
    <property type="project" value="GO_Central"/>
</dbReference>
<dbReference type="GO" id="GO:0000398">
    <property type="term" value="P:mRNA splicing, via spliceosome"/>
    <property type="evidence" value="ECO:0000318"/>
    <property type="project" value="GO_Central"/>
</dbReference>
<dbReference type="CDD" id="cd12237">
    <property type="entry name" value="RRM_snRNP35"/>
    <property type="match status" value="1"/>
</dbReference>
<dbReference type="FunFam" id="3.30.70.330:FF:000132">
    <property type="entry name" value="Small nuclear ribonucleoprotein U11/U12 subunit 35"/>
    <property type="match status" value="1"/>
</dbReference>
<dbReference type="Gene3D" id="3.30.70.330">
    <property type="match status" value="1"/>
</dbReference>
<dbReference type="InterPro" id="IPR012677">
    <property type="entry name" value="Nucleotide-bd_a/b_plait_sf"/>
</dbReference>
<dbReference type="InterPro" id="IPR035979">
    <property type="entry name" value="RBD_domain_sf"/>
</dbReference>
<dbReference type="InterPro" id="IPR000504">
    <property type="entry name" value="RRM_dom"/>
</dbReference>
<dbReference type="InterPro" id="IPR034146">
    <property type="entry name" value="snRNP35_RRM"/>
</dbReference>
<dbReference type="InterPro" id="IPR051183">
    <property type="entry name" value="U1_U11-U12_snRNP_70-35kDa"/>
</dbReference>
<dbReference type="PANTHER" id="PTHR13952">
    <property type="entry name" value="U1 SMALL NUCLEAR RIBONUCLEOPROTEIN 70 KD"/>
    <property type="match status" value="1"/>
</dbReference>
<dbReference type="PANTHER" id="PTHR13952:SF6">
    <property type="entry name" value="U11_U12 SMALL NUCLEAR RIBONUCLEOPROTEIN 35 KDA PROTEIN"/>
    <property type="match status" value="1"/>
</dbReference>
<dbReference type="Pfam" id="PF00076">
    <property type="entry name" value="RRM_1"/>
    <property type="match status" value="1"/>
</dbReference>
<dbReference type="SMART" id="SM00360">
    <property type="entry name" value="RRM"/>
    <property type="match status" value="1"/>
</dbReference>
<dbReference type="SUPFAM" id="SSF54928">
    <property type="entry name" value="RNA-binding domain, RBD"/>
    <property type="match status" value="1"/>
</dbReference>
<dbReference type="PROSITE" id="PS50102">
    <property type="entry name" value="RRM"/>
    <property type="match status" value="1"/>
</dbReference>
<proteinExistence type="evidence at transcript level"/>
<evidence type="ECO:0000250" key="1"/>
<evidence type="ECO:0000255" key="2"/>
<evidence type="ECO:0000255" key="3">
    <source>
        <dbReference type="PROSITE-ProRule" id="PRU00176"/>
    </source>
</evidence>
<evidence type="ECO:0000256" key="4">
    <source>
        <dbReference type="SAM" id="MobiDB-lite"/>
    </source>
</evidence>
<reference key="1">
    <citation type="submission" date="2006-09" db="EMBL/GenBank/DDBJ databases">
        <authorList>
            <consortium name="NIH - Xenopus Gene Collection (XGC) project"/>
        </authorList>
    </citation>
    <scope>NUCLEOTIDE SEQUENCE [LARGE SCALE MRNA]</scope>
    <source>
        <tissue>Ovary</tissue>
    </source>
</reference>
<feature type="chain" id="PRO_0000307911" description="U11/U12 small nuclear ribonucleoprotein 35 kDa protein">
    <location>
        <begin position="1"/>
        <end position="272"/>
    </location>
</feature>
<feature type="domain" description="RRM" evidence="3">
    <location>
        <begin position="51"/>
        <end position="129"/>
    </location>
</feature>
<feature type="region of interest" description="Disordered" evidence="4">
    <location>
        <begin position="146"/>
        <end position="272"/>
    </location>
</feature>
<feature type="coiled-coil region" evidence="2">
    <location>
        <begin position="221"/>
        <end position="258"/>
    </location>
</feature>
<feature type="compositionally biased region" description="Basic and acidic residues" evidence="4">
    <location>
        <begin position="146"/>
        <end position="162"/>
    </location>
</feature>
<feature type="compositionally biased region" description="Basic and acidic residues" evidence="4">
    <location>
        <begin position="190"/>
        <end position="272"/>
    </location>
</feature>
<comment type="subcellular location">
    <subcellularLocation>
        <location evidence="1">Nucleus</location>
    </subcellularLocation>
</comment>
<gene>
    <name type="primary">snrnp35</name>
    <name type="synonym">u1snrnpbp</name>
</gene>
<keyword id="KW-0175">Coiled coil</keyword>
<keyword id="KW-0539">Nucleus</keyword>
<keyword id="KW-1185">Reference proteome</keyword>
<keyword id="KW-0694">RNA-binding</keyword>
<accession>Q05AT9</accession>
<name>U1SBP_XENLA</name>
<organism>
    <name type="scientific">Xenopus laevis</name>
    <name type="common">African clawed frog</name>
    <dbReference type="NCBI Taxonomy" id="8355"/>
    <lineage>
        <taxon>Eukaryota</taxon>
        <taxon>Metazoa</taxon>
        <taxon>Chordata</taxon>
        <taxon>Craniata</taxon>
        <taxon>Vertebrata</taxon>
        <taxon>Euteleostomi</taxon>
        <taxon>Amphibia</taxon>
        <taxon>Batrachia</taxon>
        <taxon>Anura</taxon>
        <taxon>Pipoidea</taxon>
        <taxon>Pipidae</taxon>
        <taxon>Xenopodinae</taxon>
        <taxon>Xenopus</taxon>
        <taxon>Xenopus</taxon>
    </lineage>
</organism>
<protein>
    <recommendedName>
        <fullName>U11/U12 small nuclear ribonucleoprotein 35 kDa protein</fullName>
        <shortName>U11/U12 snRNP 35 kDa protein</shortName>
    </recommendedName>
    <alternativeName>
        <fullName>U1 snRNP-binding protein homolog</fullName>
    </alternativeName>
</protein>